<reference key="1">
    <citation type="journal article" date="1996" name="DNA Res.">
        <title>Sequence analysis of the genome of the unicellular cyanobacterium Synechocystis sp. strain PCC6803. II. Sequence determination of the entire genome and assignment of potential protein-coding regions.</title>
        <authorList>
            <person name="Kaneko T."/>
            <person name="Sato S."/>
            <person name="Kotani H."/>
            <person name="Tanaka A."/>
            <person name="Asamizu E."/>
            <person name="Nakamura Y."/>
            <person name="Miyajima N."/>
            <person name="Hirosawa M."/>
            <person name="Sugiura M."/>
            <person name="Sasamoto S."/>
            <person name="Kimura T."/>
            <person name="Hosouchi T."/>
            <person name="Matsuno A."/>
            <person name="Muraki A."/>
            <person name="Nakazaki N."/>
            <person name="Naruo K."/>
            <person name="Okumura S."/>
            <person name="Shimpo S."/>
            <person name="Takeuchi C."/>
            <person name="Wada T."/>
            <person name="Watanabe A."/>
            <person name="Yamada M."/>
            <person name="Yasuda M."/>
            <person name="Tabata S."/>
        </authorList>
    </citation>
    <scope>NUCLEOTIDE SEQUENCE [LARGE SCALE GENOMIC DNA]</scope>
    <source>
        <strain>ATCC 27184 / PCC 6803 / Kazusa</strain>
    </source>
</reference>
<reference key="2">
    <citation type="journal article" date="2001" name="J. Bacteriol.">
        <title>Involvement of a CbbR homolog in low CO2-induced activation of the bicarbonate transporter operon in cyanobacteria.</title>
        <authorList>
            <person name="Omata T."/>
            <person name="Gohta S."/>
            <person name="Takahashi Y."/>
            <person name="Harano Y."/>
            <person name="Maeda S."/>
        </authorList>
    </citation>
    <scope>FUNCTION</scope>
    <scope>DNA-BINDING</scope>
</reference>
<feature type="chain" id="PRO_0000341943" description="HTH-type transcriptional activator CmpR">
    <location>
        <begin position="1"/>
        <end position="304"/>
    </location>
</feature>
<feature type="domain" description="HTH lysR-type" evidence="1">
    <location>
        <begin position="1"/>
        <end position="61"/>
    </location>
</feature>
<feature type="DNA-binding region" description="H-T-H motif" evidence="1">
    <location>
        <begin position="21"/>
        <end position="40"/>
    </location>
</feature>
<keyword id="KW-0010">Activator</keyword>
<keyword id="KW-0963">Cytoplasm</keyword>
<keyword id="KW-0238">DNA-binding</keyword>
<keyword id="KW-1185">Reference proteome</keyword>
<keyword id="KW-0804">Transcription</keyword>
<keyword id="KW-0805">Transcription regulation</keyword>
<accession>Q55459</accession>
<protein>
    <recommendedName>
        <fullName>HTH-type transcriptional activator CmpR</fullName>
    </recommendedName>
</protein>
<comment type="function">
    <text evidence="2">Activates transcription of the cmpABCD operon under carbon dioxide-limited conditions. Specifically binds to the cmpR-cmpA intergenic region.</text>
</comment>
<comment type="subcellular location">
    <subcellularLocation>
        <location evidence="3">Cytoplasm</location>
    </subcellularLocation>
</comment>
<comment type="similarity">
    <text evidence="3">Belongs to the LysR transcriptional regulatory family.</text>
</comment>
<sequence length="304" mass="34099">MKNATLHQFEVFAAIARTGSFTKAAEELFLTQPTVSQQMKQLTKAIGVPLYEQIGRKIYLTEAGQAVLDASKNITSCLDQLQEVIADLQGLKKGNLRLATITTGKYFVPRLLGEFRQQYPGISISLQIGNRQQILERLANNLDDLYFLGKPPSNLDINIRHFLENPLVVIASRQHPLVKEKKISLERLVNEPLIMRESGSGTRMAVEEFFSENRLKMNVEMEISSNEAIKQAVYGGLGISILSLYSLALEGINGPLAVLDVEGFPLQKHWYIIYQKSKQLSIVAQTFLDYLFAHDEAVSIAQIF</sequence>
<evidence type="ECO:0000255" key="1">
    <source>
        <dbReference type="PROSITE-ProRule" id="PRU00253"/>
    </source>
</evidence>
<evidence type="ECO:0000269" key="2">
    <source>
    </source>
</evidence>
<evidence type="ECO:0000305" key="3"/>
<organism>
    <name type="scientific">Synechocystis sp. (strain ATCC 27184 / PCC 6803 / Kazusa)</name>
    <dbReference type="NCBI Taxonomy" id="1111708"/>
    <lineage>
        <taxon>Bacteria</taxon>
        <taxon>Bacillati</taxon>
        <taxon>Cyanobacteriota</taxon>
        <taxon>Cyanophyceae</taxon>
        <taxon>Synechococcales</taxon>
        <taxon>Merismopediaceae</taxon>
        <taxon>Synechocystis</taxon>
    </lineage>
</organism>
<name>CMPR_SYNY3</name>
<proteinExistence type="evidence at protein level"/>
<gene>
    <name type="primary">cmpR</name>
    <name type="ordered locus">sll0030</name>
</gene>
<dbReference type="EMBL" id="BA000022">
    <property type="protein sequence ID" value="BAA10802.1"/>
    <property type="molecule type" value="Genomic_DNA"/>
</dbReference>
<dbReference type="PIR" id="S75955">
    <property type="entry name" value="S75955"/>
</dbReference>
<dbReference type="SMR" id="Q55459"/>
<dbReference type="FunCoup" id="Q55459">
    <property type="interactions" value="190"/>
</dbReference>
<dbReference type="STRING" id="1148.gene:10500306"/>
<dbReference type="PaxDb" id="1148-1001315"/>
<dbReference type="EnsemblBacteria" id="BAA10802">
    <property type="protein sequence ID" value="BAA10802"/>
    <property type="gene ID" value="BAA10802"/>
</dbReference>
<dbReference type="KEGG" id="syn:sll0030"/>
<dbReference type="eggNOG" id="COG0583">
    <property type="taxonomic scope" value="Bacteria"/>
</dbReference>
<dbReference type="InParanoid" id="Q55459"/>
<dbReference type="PhylomeDB" id="Q55459"/>
<dbReference type="Proteomes" id="UP000001425">
    <property type="component" value="Chromosome"/>
</dbReference>
<dbReference type="GO" id="GO:0005737">
    <property type="term" value="C:cytoplasm"/>
    <property type="evidence" value="ECO:0007669"/>
    <property type="project" value="UniProtKB-SubCell"/>
</dbReference>
<dbReference type="GO" id="GO:0003700">
    <property type="term" value="F:DNA-binding transcription factor activity"/>
    <property type="evidence" value="ECO:0007669"/>
    <property type="project" value="InterPro"/>
</dbReference>
<dbReference type="GO" id="GO:0000976">
    <property type="term" value="F:transcription cis-regulatory region binding"/>
    <property type="evidence" value="ECO:0000318"/>
    <property type="project" value="GO_Central"/>
</dbReference>
<dbReference type="GO" id="GO:0006355">
    <property type="term" value="P:regulation of DNA-templated transcription"/>
    <property type="evidence" value="ECO:0000318"/>
    <property type="project" value="GO_Central"/>
</dbReference>
<dbReference type="CDD" id="cd08419">
    <property type="entry name" value="PBP2_CbbR_RubisCO_like"/>
    <property type="match status" value="1"/>
</dbReference>
<dbReference type="FunFam" id="1.10.10.10:FF:000001">
    <property type="entry name" value="LysR family transcriptional regulator"/>
    <property type="match status" value="1"/>
</dbReference>
<dbReference type="Gene3D" id="3.40.190.290">
    <property type="match status" value="1"/>
</dbReference>
<dbReference type="Gene3D" id="1.10.10.10">
    <property type="entry name" value="Winged helix-like DNA-binding domain superfamily/Winged helix DNA-binding domain"/>
    <property type="match status" value="1"/>
</dbReference>
<dbReference type="InterPro" id="IPR005119">
    <property type="entry name" value="LysR_subst-bd"/>
</dbReference>
<dbReference type="InterPro" id="IPR000847">
    <property type="entry name" value="Tscrpt_reg_HTH_LysR"/>
</dbReference>
<dbReference type="InterPro" id="IPR036388">
    <property type="entry name" value="WH-like_DNA-bd_sf"/>
</dbReference>
<dbReference type="InterPro" id="IPR036390">
    <property type="entry name" value="WH_DNA-bd_sf"/>
</dbReference>
<dbReference type="PANTHER" id="PTHR30126:SF5">
    <property type="entry name" value="HTH-TYPE TRANSCRIPTIONAL ACTIVATOR CMPR"/>
    <property type="match status" value="1"/>
</dbReference>
<dbReference type="PANTHER" id="PTHR30126">
    <property type="entry name" value="HTH-TYPE TRANSCRIPTIONAL REGULATOR"/>
    <property type="match status" value="1"/>
</dbReference>
<dbReference type="Pfam" id="PF00126">
    <property type="entry name" value="HTH_1"/>
    <property type="match status" value="1"/>
</dbReference>
<dbReference type="Pfam" id="PF03466">
    <property type="entry name" value="LysR_substrate"/>
    <property type="match status" value="1"/>
</dbReference>
<dbReference type="PRINTS" id="PR00039">
    <property type="entry name" value="HTHLYSR"/>
</dbReference>
<dbReference type="SUPFAM" id="SSF53850">
    <property type="entry name" value="Periplasmic binding protein-like II"/>
    <property type="match status" value="1"/>
</dbReference>
<dbReference type="SUPFAM" id="SSF46785">
    <property type="entry name" value="Winged helix' DNA-binding domain"/>
    <property type="match status" value="1"/>
</dbReference>
<dbReference type="PROSITE" id="PS50931">
    <property type="entry name" value="HTH_LYSR"/>
    <property type="match status" value="1"/>
</dbReference>